<gene>
    <name type="primary">TVP18</name>
    <name type="ordered locus">DEHA2B11924g</name>
</gene>
<protein>
    <recommendedName>
        <fullName>Golgi apparatus membrane protein TVP18</fullName>
    </recommendedName>
</protein>
<organism>
    <name type="scientific">Debaryomyces hansenii (strain ATCC 36239 / CBS 767 / BCRC 21394 / JCM 1990 / NBRC 0083 / IGC 2968)</name>
    <name type="common">Yeast</name>
    <name type="synonym">Torulaspora hansenii</name>
    <dbReference type="NCBI Taxonomy" id="284592"/>
    <lineage>
        <taxon>Eukaryota</taxon>
        <taxon>Fungi</taxon>
        <taxon>Dikarya</taxon>
        <taxon>Ascomycota</taxon>
        <taxon>Saccharomycotina</taxon>
        <taxon>Pichiomycetes</taxon>
        <taxon>Debaryomycetaceae</taxon>
        <taxon>Debaryomyces</taxon>
    </lineage>
</organism>
<evidence type="ECO:0000250" key="1"/>
<evidence type="ECO:0000255" key="2"/>
<evidence type="ECO:0000305" key="3"/>
<name>TVP18_DEBHA</name>
<proteinExistence type="inferred from homology"/>
<dbReference type="EMBL" id="CR382134">
    <property type="protein sequence ID" value="CAG85476.1"/>
    <property type="molecule type" value="Genomic_DNA"/>
</dbReference>
<dbReference type="RefSeq" id="XP_457472.1">
    <property type="nucleotide sequence ID" value="XM_457472.1"/>
</dbReference>
<dbReference type="FunCoup" id="Q6BWE7">
    <property type="interactions" value="51"/>
</dbReference>
<dbReference type="STRING" id="284592.Q6BWE7"/>
<dbReference type="GlyCosmos" id="Q6BWE7">
    <property type="glycosylation" value="2 sites, No reported glycans"/>
</dbReference>
<dbReference type="GeneID" id="2913420"/>
<dbReference type="KEGG" id="dha:DEHA2B11924g"/>
<dbReference type="eggNOG" id="ENOG502S3AC">
    <property type="taxonomic scope" value="Eukaryota"/>
</dbReference>
<dbReference type="HOGENOM" id="CLU_118698_0_0_1"/>
<dbReference type="InParanoid" id="Q6BWE7"/>
<dbReference type="OMA" id="IYAQWLG"/>
<dbReference type="OrthoDB" id="5591789at2759"/>
<dbReference type="Proteomes" id="UP000000599">
    <property type="component" value="Chromosome B"/>
</dbReference>
<dbReference type="GO" id="GO:0000139">
    <property type="term" value="C:Golgi membrane"/>
    <property type="evidence" value="ECO:0007669"/>
    <property type="project" value="UniProtKB-SubCell"/>
</dbReference>
<dbReference type="GO" id="GO:0016192">
    <property type="term" value="P:vesicle-mediated transport"/>
    <property type="evidence" value="ECO:0007669"/>
    <property type="project" value="TreeGrafter"/>
</dbReference>
<dbReference type="InterPro" id="IPR019365">
    <property type="entry name" value="TVP18/Ca-channel_flower"/>
</dbReference>
<dbReference type="PANTHER" id="PTHR13314">
    <property type="entry name" value="CALCIUM CHANNEL FLOWER HOMOLOG"/>
    <property type="match status" value="1"/>
</dbReference>
<dbReference type="PANTHER" id="PTHR13314:SF2">
    <property type="entry name" value="CALCIUM CHANNEL FLOWER HOMOLOG"/>
    <property type="match status" value="1"/>
</dbReference>
<dbReference type="Pfam" id="PF10233">
    <property type="entry name" value="Cg6151-P"/>
    <property type="match status" value="1"/>
</dbReference>
<dbReference type="SMART" id="SM01077">
    <property type="entry name" value="Cg6151-P"/>
    <property type="match status" value="1"/>
</dbReference>
<accession>Q6BWE7</accession>
<feature type="chain" id="PRO_0000343019" description="Golgi apparatus membrane protein TVP18">
    <location>
        <begin position="1"/>
        <end position="172"/>
    </location>
</feature>
<feature type="transmembrane region" description="Helical" evidence="2">
    <location>
        <begin position="31"/>
        <end position="51"/>
    </location>
</feature>
<feature type="transmembrane region" description="Helical" evidence="2">
    <location>
        <begin position="53"/>
        <end position="73"/>
    </location>
</feature>
<feature type="transmembrane region" description="Helical" evidence="2">
    <location>
        <begin position="97"/>
        <end position="114"/>
    </location>
</feature>
<feature type="transmembrane region" description="Helical" evidence="2">
    <location>
        <begin position="120"/>
        <end position="140"/>
    </location>
</feature>
<feature type="glycosylation site" description="N-linked (GlcNAc...) asparagine" evidence="2">
    <location>
        <position position="4"/>
    </location>
</feature>
<feature type="glycosylation site" description="N-linked (GlcNAc...) asparagine" evidence="2">
    <location>
        <position position="24"/>
    </location>
</feature>
<reference key="1">
    <citation type="journal article" date="2004" name="Nature">
        <title>Genome evolution in yeasts.</title>
        <authorList>
            <person name="Dujon B."/>
            <person name="Sherman D."/>
            <person name="Fischer G."/>
            <person name="Durrens P."/>
            <person name="Casaregola S."/>
            <person name="Lafontaine I."/>
            <person name="de Montigny J."/>
            <person name="Marck C."/>
            <person name="Neuveglise C."/>
            <person name="Talla E."/>
            <person name="Goffard N."/>
            <person name="Frangeul L."/>
            <person name="Aigle M."/>
            <person name="Anthouard V."/>
            <person name="Babour A."/>
            <person name="Barbe V."/>
            <person name="Barnay S."/>
            <person name="Blanchin S."/>
            <person name="Beckerich J.-M."/>
            <person name="Beyne E."/>
            <person name="Bleykasten C."/>
            <person name="Boisrame A."/>
            <person name="Boyer J."/>
            <person name="Cattolico L."/>
            <person name="Confanioleri F."/>
            <person name="de Daruvar A."/>
            <person name="Despons L."/>
            <person name="Fabre E."/>
            <person name="Fairhead C."/>
            <person name="Ferry-Dumazet H."/>
            <person name="Groppi A."/>
            <person name="Hantraye F."/>
            <person name="Hennequin C."/>
            <person name="Jauniaux N."/>
            <person name="Joyet P."/>
            <person name="Kachouri R."/>
            <person name="Kerrest A."/>
            <person name="Koszul R."/>
            <person name="Lemaire M."/>
            <person name="Lesur I."/>
            <person name="Ma L."/>
            <person name="Muller H."/>
            <person name="Nicaud J.-M."/>
            <person name="Nikolski M."/>
            <person name="Oztas S."/>
            <person name="Ozier-Kalogeropoulos O."/>
            <person name="Pellenz S."/>
            <person name="Potier S."/>
            <person name="Richard G.-F."/>
            <person name="Straub M.-L."/>
            <person name="Suleau A."/>
            <person name="Swennen D."/>
            <person name="Tekaia F."/>
            <person name="Wesolowski-Louvel M."/>
            <person name="Westhof E."/>
            <person name="Wirth B."/>
            <person name="Zeniou-Meyer M."/>
            <person name="Zivanovic Y."/>
            <person name="Bolotin-Fukuhara M."/>
            <person name="Thierry A."/>
            <person name="Bouchier C."/>
            <person name="Caudron B."/>
            <person name="Scarpelli C."/>
            <person name="Gaillardin C."/>
            <person name="Weissenbach J."/>
            <person name="Wincker P."/>
            <person name="Souciet J.-L."/>
        </authorList>
    </citation>
    <scope>NUCLEOTIDE SEQUENCE [LARGE SCALE GENOMIC DNA]</scope>
    <source>
        <strain>ATCC 36239 / CBS 767 / BCRC 21394 / JCM 1990 / NBRC 0083 / IGC 2968</strain>
    </source>
</reference>
<comment type="function">
    <text evidence="1">Golgi membrane protein involved in vesicular trafficking.</text>
</comment>
<comment type="subcellular location">
    <subcellularLocation>
        <location evidence="1">Golgi apparatus membrane</location>
        <topology evidence="1">Multi-pass membrane protein</topology>
    </subcellularLocation>
</comment>
<comment type="similarity">
    <text evidence="3">Belongs to the TVP18 family.</text>
</comment>
<sequence>MALNISSVFSNLFAGFSSDFKKKNFSLYGQWIGLLTIFLCIALGIANIFHASVVIVFSIICIVQGLVVVFVEIPFLLKICPLTDKFTTFIRNFDENWPRCGFYILMGAIQWLSLTVQVTSLIVVAVFFTLAGICYALAAFMHQEYLKTSFNVAGEPDSLEGQVGDHIVRNVL</sequence>
<keyword id="KW-0325">Glycoprotein</keyword>
<keyword id="KW-0333">Golgi apparatus</keyword>
<keyword id="KW-0472">Membrane</keyword>
<keyword id="KW-1185">Reference proteome</keyword>
<keyword id="KW-0812">Transmembrane</keyword>
<keyword id="KW-1133">Transmembrane helix</keyword>